<comment type="function">
    <text evidence="1 2">Plays an essential role in the assembly of succinate dehydrogenase (SDH), an enzyme complex (also referred to as respiratory complex II) that is a component of both the tricarboxylic acid (TCA) cycle and the mitochondrial electron transport chain, and which couples the oxidation of succinate to fumarate with the reduction of ubiquinone (coenzyme Q) to ubiquinol. Promotes maturation of the iron-sulfur protein subunit of the SDH catalytic dimer, protecting it from the deleterious effects of oxidants. May act together with SDHAF1.</text>
</comment>
<comment type="subunit">
    <text evidence="1">Interacts with the iron-sulfur protein subunit within the SDH catalytic dimer.</text>
</comment>
<comment type="subcellular location">
    <subcellularLocation>
        <location evidence="1">Mitochondrion matrix</location>
    </subcellularLocation>
</comment>
<comment type="similarity">
    <text evidence="4">Belongs to the complex I LYR family. SDHAF3 subfamily.</text>
</comment>
<gene>
    <name type="ORF">MGG_17437</name>
</gene>
<name>SDHF3_PYRO7</name>
<keyword id="KW-0143">Chaperone</keyword>
<keyword id="KW-0312">Gluconeogenesis</keyword>
<keyword id="KW-0496">Mitochondrion</keyword>
<keyword id="KW-1185">Reference proteome</keyword>
<keyword id="KW-0809">Transit peptide</keyword>
<protein>
    <recommendedName>
        <fullName evidence="1">Succinate dehydrogenase assembly factor 3, mitochondrial</fullName>
        <shortName evidence="1">SDH assembly factor 3</shortName>
        <shortName evidence="1">SDHAF3</shortName>
    </recommendedName>
</protein>
<feature type="transit peptide" description="Mitochondrion" evidence="3">
    <location>
        <begin position="1"/>
        <end position="24"/>
    </location>
</feature>
<feature type="chain" id="PRO_0000042749" description="Succinate dehydrogenase assembly factor 3, mitochondrial">
    <location>
        <begin position="25"/>
        <end position="136"/>
    </location>
</feature>
<reference key="1">
    <citation type="journal article" date="2005" name="Nature">
        <title>The genome sequence of the rice blast fungus Magnaporthe grisea.</title>
        <authorList>
            <person name="Dean R.A."/>
            <person name="Talbot N.J."/>
            <person name="Ebbole D.J."/>
            <person name="Farman M.L."/>
            <person name="Mitchell T.K."/>
            <person name="Orbach M.J."/>
            <person name="Thon M.R."/>
            <person name="Kulkarni R."/>
            <person name="Xu J.-R."/>
            <person name="Pan H."/>
            <person name="Read N.D."/>
            <person name="Lee Y.-H."/>
            <person name="Carbone I."/>
            <person name="Brown D."/>
            <person name="Oh Y.Y."/>
            <person name="Donofrio N."/>
            <person name="Jeong J.S."/>
            <person name="Soanes D.M."/>
            <person name="Djonovic S."/>
            <person name="Kolomiets E."/>
            <person name="Rehmeyer C."/>
            <person name="Li W."/>
            <person name="Harding M."/>
            <person name="Kim S."/>
            <person name="Lebrun M.-H."/>
            <person name="Bohnert H."/>
            <person name="Coughlan S."/>
            <person name="Butler J."/>
            <person name="Calvo S.E."/>
            <person name="Ma L.-J."/>
            <person name="Nicol R."/>
            <person name="Purcell S."/>
            <person name="Nusbaum C."/>
            <person name="Galagan J.E."/>
            <person name="Birren B.W."/>
        </authorList>
    </citation>
    <scope>NUCLEOTIDE SEQUENCE [LARGE SCALE GENOMIC DNA]</scope>
    <source>
        <strain>70-15 / ATCC MYA-4617 / FGSC 8958</strain>
    </source>
</reference>
<organism>
    <name type="scientific">Pyricularia oryzae (strain 70-15 / ATCC MYA-4617 / FGSC 8958)</name>
    <name type="common">Rice blast fungus</name>
    <name type="synonym">Magnaporthe oryzae</name>
    <dbReference type="NCBI Taxonomy" id="242507"/>
    <lineage>
        <taxon>Eukaryota</taxon>
        <taxon>Fungi</taxon>
        <taxon>Dikarya</taxon>
        <taxon>Ascomycota</taxon>
        <taxon>Pezizomycotina</taxon>
        <taxon>Sordariomycetes</taxon>
        <taxon>Sordariomycetidae</taxon>
        <taxon>Magnaporthales</taxon>
        <taxon>Pyriculariaceae</taxon>
        <taxon>Pyricularia</taxon>
    </lineage>
</organism>
<proteinExistence type="inferred from homology"/>
<evidence type="ECO:0000250" key="1">
    <source>
        <dbReference type="UniProtKB" id="Q04401"/>
    </source>
</evidence>
<evidence type="ECO:0000250" key="2">
    <source>
        <dbReference type="UniProtKB" id="Q8SZ16"/>
    </source>
</evidence>
<evidence type="ECO:0000255" key="3"/>
<evidence type="ECO:0000305" key="4"/>
<accession>P0C146</accession>
<accession>A4REY4</accession>
<accession>G4NBP0</accession>
<sequence>MRASMVRRMAAAASSSASSSLRPAPLALLPPIPLYRRLLRAHRKHLPAEMRLLGDEYLKSEFRAHRNIDNPAHLIGFLTEWQLYAQQVEGESWLGEKIDQAKVEKLSEQQVGQLYELMMAIKSRREGGEGEGQESP</sequence>
<dbReference type="EMBL" id="CM001235">
    <property type="protein sequence ID" value="EHA48948.1"/>
    <property type="molecule type" value="Genomic_DNA"/>
</dbReference>
<dbReference type="RefSeq" id="XP_003718532.1">
    <property type="nucleotide sequence ID" value="XM_003718484.1"/>
</dbReference>
<dbReference type="SMR" id="P0C146"/>
<dbReference type="FunCoup" id="P0C146">
    <property type="interactions" value="258"/>
</dbReference>
<dbReference type="STRING" id="242507.P0C146"/>
<dbReference type="EnsemblFungi" id="MGG_17437T0">
    <property type="protein sequence ID" value="MGG_17437T0"/>
    <property type="gene ID" value="MGG_17437"/>
</dbReference>
<dbReference type="GeneID" id="12984112"/>
<dbReference type="KEGG" id="mgr:MGG_17437"/>
<dbReference type="VEuPathDB" id="FungiDB:MGG_17437"/>
<dbReference type="eggNOG" id="KOG4100">
    <property type="taxonomic scope" value="Eukaryota"/>
</dbReference>
<dbReference type="HOGENOM" id="CLU_102310_1_0_1"/>
<dbReference type="InParanoid" id="P0C146"/>
<dbReference type="OMA" id="WQQTNEN"/>
<dbReference type="OrthoDB" id="278329at2759"/>
<dbReference type="Proteomes" id="UP000009058">
    <property type="component" value="Chromosome 5"/>
</dbReference>
<dbReference type="GO" id="GO:0005758">
    <property type="term" value="C:mitochondrial intermembrane space"/>
    <property type="evidence" value="ECO:0007669"/>
    <property type="project" value="TreeGrafter"/>
</dbReference>
<dbReference type="GO" id="GO:0005759">
    <property type="term" value="C:mitochondrial matrix"/>
    <property type="evidence" value="ECO:0007669"/>
    <property type="project" value="UniProtKB-SubCell"/>
</dbReference>
<dbReference type="GO" id="GO:0006094">
    <property type="term" value="P:gluconeogenesis"/>
    <property type="evidence" value="ECO:0007669"/>
    <property type="project" value="UniProtKB-KW"/>
</dbReference>
<dbReference type="GO" id="GO:0034553">
    <property type="term" value="P:mitochondrial respiratory chain complex II assembly"/>
    <property type="evidence" value="ECO:0007669"/>
    <property type="project" value="InterPro"/>
</dbReference>
<dbReference type="GO" id="GO:0006105">
    <property type="term" value="P:succinate metabolic process"/>
    <property type="evidence" value="ECO:0007669"/>
    <property type="project" value="TreeGrafter"/>
</dbReference>
<dbReference type="CDD" id="cd20270">
    <property type="entry name" value="Complex1_LYR_SDHAF3_LYRM10"/>
    <property type="match status" value="1"/>
</dbReference>
<dbReference type="InterPro" id="IPR008381">
    <property type="entry name" value="SDHAF3/Sdh7"/>
</dbReference>
<dbReference type="PANTHER" id="PTHR13137">
    <property type="entry name" value="DC11 ACN9 HOMOLOG"/>
    <property type="match status" value="1"/>
</dbReference>
<dbReference type="PANTHER" id="PTHR13137:SF6">
    <property type="entry name" value="SUCCINATE DEHYDROGENASE ASSEMBLY FACTOR 3, MITOCHONDRIAL"/>
    <property type="match status" value="1"/>
</dbReference>
<dbReference type="Pfam" id="PF13233">
    <property type="entry name" value="Complex1_LYR_2"/>
    <property type="match status" value="1"/>
</dbReference>